<evidence type="ECO:0000255" key="1">
    <source>
        <dbReference type="HAMAP-Rule" id="MF_01211"/>
    </source>
</evidence>
<proteinExistence type="inferred from homology"/>
<reference key="1">
    <citation type="journal article" date="2002" name="Proc. Natl. Acad. Sci. U.S.A.">
        <title>The complete genome of hyperthermophile Methanopyrus kandleri AV19 and monophyly of archaeal methanogens.</title>
        <authorList>
            <person name="Slesarev A.I."/>
            <person name="Mezhevaya K.V."/>
            <person name="Makarova K.S."/>
            <person name="Polushin N.N."/>
            <person name="Shcherbinina O.V."/>
            <person name="Shakhova V.V."/>
            <person name="Belova G.I."/>
            <person name="Aravind L."/>
            <person name="Natale D.A."/>
            <person name="Rogozin I.B."/>
            <person name="Tatusov R.L."/>
            <person name="Wolf Y.I."/>
            <person name="Stetter K.O."/>
            <person name="Malykh A.G."/>
            <person name="Koonin E.V."/>
            <person name="Kozyavkin S.A."/>
        </authorList>
    </citation>
    <scope>NUCLEOTIDE SEQUENCE [LARGE SCALE GENOMIC DNA]</scope>
    <source>
        <strain>AV19 / DSM 6324 / JCM 9639 / NBRC 100938</strain>
    </source>
</reference>
<name>PYRK_METKA</name>
<protein>
    <recommendedName>
        <fullName evidence="1">Probable dihydroorotate dehydrogenase B (NAD(+)), electron transfer subunit</fullName>
    </recommendedName>
    <alternativeName>
        <fullName evidence="1">Dihydroorotate oxidase B, electron transfer subunit</fullName>
    </alternativeName>
</protein>
<feature type="chain" id="PRO_0000148376" description="Probable dihydroorotate dehydrogenase B (NAD(+)), electron transfer subunit">
    <location>
        <begin position="1"/>
        <end position="262"/>
    </location>
</feature>
<feature type="domain" description="FAD-binding FR-type" evidence="1">
    <location>
        <begin position="4"/>
        <end position="97"/>
    </location>
</feature>
<feature type="binding site" evidence="1">
    <location>
        <position position="217"/>
    </location>
    <ligand>
        <name>[2Fe-2S] cluster</name>
        <dbReference type="ChEBI" id="CHEBI:190135"/>
    </ligand>
</feature>
<feature type="binding site" evidence="1">
    <location>
        <position position="222"/>
    </location>
    <ligand>
        <name>[2Fe-2S] cluster</name>
        <dbReference type="ChEBI" id="CHEBI:190135"/>
    </ligand>
</feature>
<feature type="binding site" evidence="1">
    <location>
        <position position="225"/>
    </location>
    <ligand>
        <name>[2Fe-2S] cluster</name>
        <dbReference type="ChEBI" id="CHEBI:190135"/>
    </ligand>
</feature>
<feature type="binding site" evidence="1">
    <location>
        <position position="234"/>
    </location>
    <ligand>
        <name>[2Fe-2S] cluster</name>
        <dbReference type="ChEBI" id="CHEBI:190135"/>
    </ligand>
</feature>
<keyword id="KW-0001">2Fe-2S</keyword>
<keyword id="KW-0249">Electron transport</keyword>
<keyword id="KW-0274">FAD</keyword>
<keyword id="KW-0285">Flavoprotein</keyword>
<keyword id="KW-0408">Iron</keyword>
<keyword id="KW-0411">Iron-sulfur</keyword>
<keyword id="KW-0479">Metal-binding</keyword>
<keyword id="KW-0665">Pyrimidine biosynthesis</keyword>
<keyword id="KW-1185">Reference proteome</keyword>
<keyword id="KW-0813">Transport</keyword>
<dbReference type="EMBL" id="AE009439">
    <property type="protein sequence ID" value="AAM01779.1"/>
    <property type="molecule type" value="Genomic_DNA"/>
</dbReference>
<dbReference type="SMR" id="P58887"/>
<dbReference type="FunCoup" id="P58887">
    <property type="interactions" value="87"/>
</dbReference>
<dbReference type="STRING" id="190192.MK0564"/>
<dbReference type="PaxDb" id="190192-MK0564"/>
<dbReference type="EnsemblBacteria" id="AAM01779">
    <property type="protein sequence ID" value="AAM01779"/>
    <property type="gene ID" value="MK0564"/>
</dbReference>
<dbReference type="KEGG" id="mka:MK0564"/>
<dbReference type="PATRIC" id="fig|190192.8.peg.599"/>
<dbReference type="HOGENOM" id="CLU_003827_1_1_2"/>
<dbReference type="InParanoid" id="P58887"/>
<dbReference type="UniPathway" id="UPA00070">
    <property type="reaction ID" value="UER00945"/>
</dbReference>
<dbReference type="Proteomes" id="UP000001826">
    <property type="component" value="Chromosome"/>
</dbReference>
<dbReference type="GO" id="GO:0051537">
    <property type="term" value="F:2 iron, 2 sulfur cluster binding"/>
    <property type="evidence" value="ECO:0007669"/>
    <property type="project" value="UniProtKB-KW"/>
</dbReference>
<dbReference type="GO" id="GO:0009055">
    <property type="term" value="F:electron transfer activity"/>
    <property type="evidence" value="ECO:0007669"/>
    <property type="project" value="UniProtKB-UniRule"/>
</dbReference>
<dbReference type="GO" id="GO:0050660">
    <property type="term" value="F:flavin adenine dinucleotide binding"/>
    <property type="evidence" value="ECO:0007669"/>
    <property type="project" value="InterPro"/>
</dbReference>
<dbReference type="GO" id="GO:0046872">
    <property type="term" value="F:metal ion binding"/>
    <property type="evidence" value="ECO:0007669"/>
    <property type="project" value="UniProtKB-KW"/>
</dbReference>
<dbReference type="GO" id="GO:0016491">
    <property type="term" value="F:oxidoreductase activity"/>
    <property type="evidence" value="ECO:0007669"/>
    <property type="project" value="InterPro"/>
</dbReference>
<dbReference type="GO" id="GO:0044205">
    <property type="term" value="P:'de novo' UMP biosynthetic process"/>
    <property type="evidence" value="ECO:0007669"/>
    <property type="project" value="UniProtKB-UniRule"/>
</dbReference>
<dbReference type="Gene3D" id="3.40.50.80">
    <property type="entry name" value="Nucleotide-binding domain of ferredoxin-NADP reductase (FNR) module"/>
    <property type="match status" value="1"/>
</dbReference>
<dbReference type="Gene3D" id="2.40.30.10">
    <property type="entry name" value="Translation factors"/>
    <property type="match status" value="1"/>
</dbReference>
<dbReference type="HAMAP" id="MF_01211">
    <property type="entry name" value="DHODB_Fe_S_bind"/>
    <property type="match status" value="1"/>
</dbReference>
<dbReference type="InterPro" id="IPR012165">
    <property type="entry name" value="Cyt_c3_hydrogenase_gsu"/>
</dbReference>
<dbReference type="InterPro" id="IPR019480">
    <property type="entry name" value="Dihydroorotate_DH_Fe-S-bd"/>
</dbReference>
<dbReference type="InterPro" id="IPR023455">
    <property type="entry name" value="Dihydroorotate_DHASE_ETsu"/>
</dbReference>
<dbReference type="InterPro" id="IPR017927">
    <property type="entry name" value="FAD-bd_FR_type"/>
</dbReference>
<dbReference type="InterPro" id="IPR039261">
    <property type="entry name" value="FNR_nucleotide-bd"/>
</dbReference>
<dbReference type="InterPro" id="IPR001433">
    <property type="entry name" value="OxRdtase_FAD/NAD-bd"/>
</dbReference>
<dbReference type="InterPro" id="IPR050353">
    <property type="entry name" value="PyrK_electron_transfer"/>
</dbReference>
<dbReference type="InterPro" id="IPR017938">
    <property type="entry name" value="Riboflavin_synthase-like_b-brl"/>
</dbReference>
<dbReference type="NCBIfam" id="NF000796">
    <property type="entry name" value="PRK00054.1-1"/>
    <property type="match status" value="1"/>
</dbReference>
<dbReference type="PANTHER" id="PTHR43513">
    <property type="entry name" value="DIHYDROOROTATE DEHYDROGENASE B (NAD(+)), ELECTRON TRANSFER SUBUNIT"/>
    <property type="match status" value="1"/>
</dbReference>
<dbReference type="PANTHER" id="PTHR43513:SF3">
    <property type="entry name" value="DIHYDROOROTATE DEHYDROGENASE B (NAD(+)), ELECTRON TRANSFER SUBUNIT-RELATED"/>
    <property type="match status" value="1"/>
</dbReference>
<dbReference type="Pfam" id="PF10418">
    <property type="entry name" value="DHODB_Fe-S_bind"/>
    <property type="match status" value="1"/>
</dbReference>
<dbReference type="Pfam" id="PF00175">
    <property type="entry name" value="NAD_binding_1"/>
    <property type="match status" value="1"/>
</dbReference>
<dbReference type="PIRSF" id="PIRSF006816">
    <property type="entry name" value="Cyc3_hyd_g"/>
    <property type="match status" value="1"/>
</dbReference>
<dbReference type="PRINTS" id="PR00409">
    <property type="entry name" value="PHDIOXRDTASE"/>
</dbReference>
<dbReference type="SUPFAM" id="SSF52343">
    <property type="entry name" value="Ferredoxin reductase-like, C-terminal NADP-linked domain"/>
    <property type="match status" value="1"/>
</dbReference>
<dbReference type="SUPFAM" id="SSF63380">
    <property type="entry name" value="Riboflavin synthase domain-like"/>
    <property type="match status" value="1"/>
</dbReference>
<dbReference type="PROSITE" id="PS00197">
    <property type="entry name" value="2FE2S_FER_1"/>
    <property type="match status" value="1"/>
</dbReference>
<dbReference type="PROSITE" id="PS51384">
    <property type="entry name" value="FAD_FR"/>
    <property type="match status" value="1"/>
</dbReference>
<organism>
    <name type="scientific">Methanopyrus kandleri (strain AV19 / DSM 6324 / JCM 9639 / NBRC 100938)</name>
    <dbReference type="NCBI Taxonomy" id="190192"/>
    <lineage>
        <taxon>Archaea</taxon>
        <taxon>Methanobacteriati</taxon>
        <taxon>Methanobacteriota</taxon>
        <taxon>Methanomada group</taxon>
        <taxon>Methanopyri</taxon>
        <taxon>Methanopyrales</taxon>
        <taxon>Methanopyraceae</taxon>
        <taxon>Methanopyrus</taxon>
    </lineage>
</organism>
<sequence length="262" mass="28783">MVSVKPIPAEVVENREECERTIVLRLRPERPIRWEPGQFLMLGISGVDEKPMAFSGGDDREFELTIEIVGPFTERCADLEPGDVVWVRGPYGKPFEVRGSRAVVVAGGTGVAPLVPLVERLRRARVHVTSVLGGPHADRLPRKDDLEKLSDELYVTTEDGSEGRKGFPTDVLEELVEKECPDVVYACGPEGMLVRVAEIAREHDVPCQVSVVRYVKCGEGICGSCALGKGLLVCRDGPVFWTEELEGTEFGGVRRDVTGKPE</sequence>
<accession>P58887</accession>
<gene>
    <name evidence="1" type="primary">pyrK</name>
    <name type="ordered locus">MK0564</name>
</gene>
<comment type="function">
    <text evidence="1">Responsible for channeling the electrons from the oxidation of dihydroorotate from the FMN redox center in the PyrD type B subunit to the ultimate electron acceptor NAD(+).</text>
</comment>
<comment type="cofactor">
    <cofactor evidence="1">
        <name>[2Fe-2S] cluster</name>
        <dbReference type="ChEBI" id="CHEBI:190135"/>
    </cofactor>
    <text evidence="1">Binds 1 [2Fe-2S] cluster per subunit.</text>
</comment>
<comment type="cofactor">
    <cofactor evidence="1">
        <name>FAD</name>
        <dbReference type="ChEBI" id="CHEBI:57692"/>
    </cofactor>
    <text evidence="1">Binds 1 FAD per subunit.</text>
</comment>
<comment type="pathway">
    <text evidence="1">Pyrimidine metabolism; UMP biosynthesis via de novo pathway; orotate from (S)-dihydroorotate (NAD(+) route): step 1/1.</text>
</comment>
<comment type="subunit">
    <text evidence="1">Heterotetramer of 2 PyrK and 2 PyrD type B subunits.</text>
</comment>
<comment type="similarity">
    <text evidence="1">Belongs to the PyrK family.</text>
</comment>